<comment type="function">
    <text evidence="3 4 8">A minor component of the bacterial microcompartment (BMC) shell. Expression of 5 proteins in E.coli (BMC-H (Hoch_5815), BMC-P (Hoch_5814), and 3 BMC-T (Hoch_5812, Hoch_5816, Hoch_3341)) forms 40 nm artificial BMCs with a molecular mass of 6.5 MDa. One of 2 stacked pseudohexamers in the BMC. There are 20 BMC-T pseudohexamers per BMC, composed of mixed BMC-T1, BMC-T2 and BMC-T3. The shell facets are 20-30 Angstroms thick, with 1 of the stacked BMC-T trimers protruding to the exterior (PubMed:28642439, PubMed:30833088). The stacked trimers may serve as conduits to allow metabolite flux across the protein shell, gated by Arg-68 which contacts Glu-67 in an adjacent subunit; they are flexible enough to play a role in accommodating variations in shell assembly (Probable).</text>
</comment>
<comment type="subunit">
    <text evidence="3">Homotrimerizes to form a pseudohexamer. These stack, with the concave faces together, with the concave faces together, in purified bacterial microcompartments (BMC).</text>
</comment>
<comment type="subcellular location">
    <subcellularLocation>
        <location evidence="2 3 4">Bacterial microcompartment</location>
    </subcellularLocation>
</comment>
<comment type="domain">
    <text evidence="3 4">These proteins have 2 BMC domains which evolve independently of each other, giving the term pseudohexamer to the trimerized subunit. Although the homotrimer fills the approximate space of a BMC hexamer protein, the BMC-T trimers are more compact. Their universal presence in BMCs indicates their structural importance. The homohexamers form pores of at least 5 Angstroms in diameter; in the stacked homohexamer both pores are closed (PubMed:28642439). In the BMC the inner pore is fully or partially closed while the outer pore is closed (PubMed:30833088).</text>
</comment>
<comment type="disruption phenotype">
    <text evidence="2">Not required for efficient BMC formation; when deleted from an artificial operon (Hoch_5815, Hoch_5812, Hoch_3341, Hoch_5816, Hoch_4425, Hoch_4426, Hoch_5814) being expressed in E.coli, a 2-fold decrease in BMC formation is seen.</text>
</comment>
<comment type="biotechnology">
    <text evidence="2 3">Artificial BMCs can be made in E.coli by expressing (Hoch_5815, Hoch_5812, Hoch_3341, Hoch_5816, Hoch_4425, Hoch_4426, Hoch_5814) or (BMC-H (Hoch_5815), BMC-P (Hoch_5814), and 3 BMC-T (Hoch_5812, Hoch_5816, Hoch_3341)). Cargo proteins can be targeted to this BMC.</text>
</comment>
<comment type="similarity">
    <text evidence="1">Belongs to the EutL/PduB family.</text>
</comment>
<name>BMCT3_HALO1</name>
<keyword id="KW-0002">3D-structure</keyword>
<keyword id="KW-1283">Bacterial microcompartment</keyword>
<keyword id="KW-1185">Reference proteome</keyword>
<organism>
    <name type="scientific">Haliangium ochraceum (strain DSM 14365 / JCM 11303 / SMP-2)</name>
    <dbReference type="NCBI Taxonomy" id="502025"/>
    <lineage>
        <taxon>Bacteria</taxon>
        <taxon>Pseudomonadati</taxon>
        <taxon>Myxococcota</taxon>
        <taxon>Polyangia</taxon>
        <taxon>Haliangiales</taxon>
        <taxon>Kofleriaceae</taxon>
        <taxon>Haliangium</taxon>
    </lineage>
</organism>
<accession>D0LV02</accession>
<evidence type="ECO:0000255" key="1">
    <source>
        <dbReference type="PROSITE-ProRule" id="PRU01279"/>
    </source>
</evidence>
<evidence type="ECO:0000269" key="2">
    <source>
    </source>
</evidence>
<evidence type="ECO:0000269" key="3">
    <source>
    </source>
</evidence>
<evidence type="ECO:0000269" key="4">
    <source>
    </source>
</evidence>
<evidence type="ECO:0000303" key="5">
    <source>
    </source>
</evidence>
<evidence type="ECO:0000303" key="6">
    <source>
    </source>
</evidence>
<evidence type="ECO:0000305" key="7">
    <source>
    </source>
</evidence>
<evidence type="ECO:0000305" key="8">
    <source>
    </source>
</evidence>
<evidence type="ECO:0007744" key="9">
    <source>
        <dbReference type="PDB" id="5V76"/>
    </source>
</evidence>
<evidence type="ECO:0007829" key="10">
    <source>
        <dbReference type="PDB" id="5V76"/>
    </source>
</evidence>
<sequence>MELRAYTVLDALQPQLVAFLQTVSTGFMPMEQQASVLVEIAPGIAVNQLTDAALKATRCQPGLQIVERAYGLIEMHDDDQGQVRAAGDAMLAHLGAREADRLAPRVVSSQIITGIDGHQSQLINRMRHGDMIQAGQTLYILEVHPAGYAALAANEAEKAAPIKLLEVVTFGAFGRLWLGGGEAEIAEAARAAEGALAGLSGRDNRG</sequence>
<reference key="1">
    <citation type="journal article" date="2010" name="Stand. Genomic Sci.">
        <title>Complete genome sequence of Haliangium ochraceum type strain (SMP-2).</title>
        <authorList>
            <person name="Ivanova N."/>
            <person name="Daum C."/>
            <person name="Lang E."/>
            <person name="Abt B."/>
            <person name="Kopitz M."/>
            <person name="Saunders E."/>
            <person name="Lapidus A."/>
            <person name="Lucas S."/>
            <person name="Glavina Del Rio T."/>
            <person name="Nolan M."/>
            <person name="Tice H."/>
            <person name="Copeland A."/>
            <person name="Cheng J.F."/>
            <person name="Chen F."/>
            <person name="Bruce D."/>
            <person name="Goodwin L."/>
            <person name="Pitluck S."/>
            <person name="Mavromatis K."/>
            <person name="Pati A."/>
            <person name="Mikhailova N."/>
            <person name="Chen A."/>
            <person name="Palaniappan K."/>
            <person name="Land M."/>
            <person name="Hauser L."/>
            <person name="Chang Y.J."/>
            <person name="Jeffries C.D."/>
            <person name="Detter J.C."/>
            <person name="Brettin T."/>
            <person name="Rohde M."/>
            <person name="Goker M."/>
            <person name="Bristow J."/>
            <person name="Markowitz V."/>
            <person name="Eisen J.A."/>
            <person name="Hugenholtz P."/>
            <person name="Kyrpides N.C."/>
            <person name="Klenk H.P."/>
        </authorList>
    </citation>
    <scope>NUCLEOTIDE SEQUENCE [LARGE SCALE GENOMIC DNA]</scope>
    <source>
        <strain>DSM 14365 / CIP 107738 / JCM 11303 / AJ 13395 / SMP-2</strain>
    </source>
</reference>
<reference key="2">
    <citation type="journal article" date="2014" name="J. Mol. Biol.">
        <title>Assembly of robust bacterial microcompartment shells using building blocks from an organelle of unknown function.</title>
        <authorList>
            <person name="Lassila J.K."/>
            <person name="Bernstein S.L."/>
            <person name="Kinney J.N."/>
            <person name="Axen S.D."/>
            <person name="Kerfeld C.A."/>
        </authorList>
    </citation>
    <scope>EXPRESSION IN E.COLI</scope>
    <scope>SUBCELLULAR LOCATION</scope>
    <scope>DISRUPTION PHENOTYPE</scope>
    <scope>BIOTECHNOLOGY</scope>
</reference>
<reference evidence="9" key="3">
    <citation type="journal article" date="2017" name="Science">
        <title>Assembly principles and structure of a 6.5-MDa bacterial microcompartment shell.</title>
        <authorList>
            <person name="Sutter M."/>
            <person name="Greber B."/>
            <person name="Aussignargues C."/>
            <person name="Kerfeld C.A."/>
        </authorList>
    </citation>
    <scope>X-RAY CRYSTALLOGRAPHY (1.55 ANGSTROMS)</scope>
    <scope>STRUCTURE BY ELECTRON MICROSCOPY OF BMC</scope>
    <scope>FUNCTION</scope>
    <scope>SUBUNIT</scope>
    <scope>SUBCELLULAR LOCATION</scope>
    <scope>DOMAIN</scope>
    <source>
        <strain>DSM 14365 / CIP 107738 / JCM 11303 / AJ 13395 / SMP-2</strain>
    </source>
</reference>
<reference key="4">
    <citation type="journal article" date="2019" name="Structure">
        <title>The Plasticity of Molecular Interactions Governs Bacterial Microcompartment Shell Assembly.</title>
        <authorList>
            <person name="Greber B.J."/>
            <person name="Sutter M."/>
            <person name="Kerfeld C.A."/>
        </authorList>
    </citation>
    <scope>STRUCTURE BY ELECTRON MICROSCOPY (3.00 ANGSTROMS)</scope>
    <scope>FUNCTION</scope>
    <scope>SUBUNIT</scope>
    <scope>SUBCELLULAR LOCATION</scope>
    <scope>DOMAIN</scope>
</reference>
<protein>
    <recommendedName>
        <fullName>Bacterial microcompartment protein trimer-3</fullName>
        <shortName evidence="5">BMC-T3</shortName>
        <shortName evidence="6">BMC-T3(D)</shortName>
    </recommendedName>
</protein>
<gene>
    <name type="ordered locus">Hoch_3341</name>
</gene>
<proteinExistence type="evidence at protein level"/>
<dbReference type="EMBL" id="CP001804">
    <property type="protein sequence ID" value="ACY15843.1"/>
    <property type="molecule type" value="Genomic_DNA"/>
</dbReference>
<dbReference type="RefSeq" id="WP_012828443.1">
    <property type="nucleotide sequence ID" value="NC_013440.1"/>
</dbReference>
<dbReference type="PDB" id="5V76">
    <property type="method" value="X-ray"/>
    <property type="resolution" value="1.55 A"/>
    <property type="chains" value="A/B=1-206"/>
</dbReference>
<dbReference type="PDBsum" id="5V76"/>
<dbReference type="SMR" id="D0LV02"/>
<dbReference type="IntAct" id="D0LV02">
    <property type="interactions" value="1"/>
</dbReference>
<dbReference type="STRING" id="502025.Hoch_3341"/>
<dbReference type="KEGG" id="hoh:Hoch_3341"/>
<dbReference type="eggNOG" id="COG4577">
    <property type="taxonomic scope" value="Bacteria"/>
</dbReference>
<dbReference type="HOGENOM" id="CLU_091281_0_0_7"/>
<dbReference type="OrthoDB" id="5800762at2"/>
<dbReference type="Proteomes" id="UP000001880">
    <property type="component" value="Chromosome"/>
</dbReference>
<dbReference type="GO" id="GO:0031469">
    <property type="term" value="C:bacterial microcompartment"/>
    <property type="evidence" value="ECO:0007669"/>
    <property type="project" value="UniProtKB-SubCell"/>
</dbReference>
<dbReference type="CDD" id="cd07052">
    <property type="entry name" value="BMC_like_1_repeat2"/>
    <property type="match status" value="1"/>
</dbReference>
<dbReference type="Gene3D" id="3.30.70.1710">
    <property type="match status" value="2"/>
</dbReference>
<dbReference type="InterPro" id="IPR044870">
    <property type="entry name" value="BMC_CP"/>
</dbReference>
<dbReference type="InterPro" id="IPR000249">
    <property type="entry name" value="BMC_dom"/>
</dbReference>
<dbReference type="InterPro" id="IPR037233">
    <property type="entry name" value="CcmK-like_sf"/>
</dbReference>
<dbReference type="SMART" id="SM00877">
    <property type="entry name" value="BMC"/>
    <property type="match status" value="1"/>
</dbReference>
<dbReference type="SUPFAM" id="SSF143414">
    <property type="entry name" value="CcmK-like"/>
    <property type="match status" value="1"/>
</dbReference>
<dbReference type="PROSITE" id="PS51931">
    <property type="entry name" value="BMC_CP"/>
    <property type="match status" value="2"/>
</dbReference>
<feature type="chain" id="PRO_0000452548" description="Bacterial microcompartment protein trimer-3">
    <location>
        <begin position="1"/>
        <end position="206"/>
    </location>
</feature>
<feature type="domain" description="BMC circularly permuted 1" evidence="1">
    <location>
        <begin position="2"/>
        <end position="104"/>
    </location>
</feature>
<feature type="domain" description="BMC circularly permuted 2" evidence="1">
    <location>
        <begin position="105"/>
        <end position="206"/>
    </location>
</feature>
<feature type="short sequence motif" description="Pore gating residues" evidence="4 7 9">
    <location>
        <begin position="67"/>
        <end position="68"/>
    </location>
</feature>
<feature type="strand" evidence="10">
    <location>
        <begin position="2"/>
        <end position="11"/>
    </location>
</feature>
<feature type="helix" evidence="10">
    <location>
        <begin position="14"/>
        <end position="23"/>
    </location>
</feature>
<feature type="strand" evidence="10">
    <location>
        <begin position="25"/>
        <end position="27"/>
    </location>
</feature>
<feature type="strand" evidence="10">
    <location>
        <begin position="34"/>
        <end position="42"/>
    </location>
</feature>
<feature type="helix" evidence="10">
    <location>
        <begin position="43"/>
        <end position="45"/>
    </location>
</feature>
<feature type="helix" evidence="10">
    <location>
        <begin position="46"/>
        <end position="56"/>
    </location>
</feature>
<feature type="strand" evidence="10">
    <location>
        <begin position="60"/>
        <end position="66"/>
    </location>
</feature>
<feature type="strand" evidence="10">
    <location>
        <begin position="71"/>
        <end position="78"/>
    </location>
</feature>
<feature type="helix" evidence="10">
    <location>
        <begin position="80"/>
        <end position="94"/>
    </location>
</feature>
<feature type="helix" evidence="10">
    <location>
        <begin position="98"/>
        <end position="100"/>
    </location>
</feature>
<feature type="strand" evidence="10">
    <location>
        <begin position="105"/>
        <end position="112"/>
    </location>
</feature>
<feature type="helix" evidence="10">
    <location>
        <begin position="117"/>
        <end position="126"/>
    </location>
</feature>
<feature type="strand" evidence="10">
    <location>
        <begin position="137"/>
        <end position="145"/>
    </location>
</feature>
<feature type="helix" evidence="10">
    <location>
        <begin position="146"/>
        <end position="148"/>
    </location>
</feature>
<feature type="helix" evidence="10">
    <location>
        <begin position="149"/>
        <end position="159"/>
    </location>
</feature>
<feature type="strand" evidence="10">
    <location>
        <begin position="163"/>
        <end position="168"/>
    </location>
</feature>
<feature type="strand" evidence="10">
    <location>
        <begin position="170"/>
        <end position="180"/>
    </location>
</feature>
<feature type="helix" evidence="10">
    <location>
        <begin position="182"/>
        <end position="197"/>
    </location>
</feature>